<gene>
    <name type="primary">MELT</name>
</gene>
<keyword id="KW-0027">Amidation</keyword>
<keyword id="KW-0929">Antimicrobial</keyword>
<keyword id="KW-0204">Cytolysis</keyword>
<keyword id="KW-0291">Formylation</keyword>
<keyword id="KW-0354">Hemolysis</keyword>
<keyword id="KW-0406">Ion transport</keyword>
<keyword id="KW-0472">Membrane</keyword>
<keyword id="KW-0626">Porin</keyword>
<keyword id="KW-0964">Secreted</keyword>
<keyword id="KW-0732">Signal</keyword>
<keyword id="KW-1052">Target cell membrane</keyword>
<keyword id="KW-1053">Target membrane</keyword>
<keyword id="KW-0800">Toxin</keyword>
<keyword id="KW-0812">Transmembrane</keyword>
<keyword id="KW-0813">Transport</keyword>
<comment type="function">
    <text evidence="2">Main toxin of bee venom with strong hemolytic activity and antimicrobial activity. It has enhancing effects on bee venom phospholipase A2 activity. This amphipathic toxin binds to negatively charged membrane surface and forms pore by inserting into lipid bilayers inducing the leakage of ions and molecules and the enhancement of permeability that ultimately leads to cell lysis. It acts as a voltage-gated pore with higher selectivity for anions over cations. The ion conductance has been shown to be voltage-dependent. Self-association of melittin in membranes is promoted by high ionic strength, but not by the presence of negatively charged lipids. In vivo, intradermal injection into healthy human volunteers produce sharp pain sensation and an inflammatory response. It produces pain by activating primary nociceptor cells directly and indirectly due to its ability to activate plasma membrane phospholipase A2 and its pore-forming activity.</text>
</comment>
<comment type="subunit">
    <text evidence="2">Monomer (in solution and for integration into membranes), homotetramer (in solution and potentially as a toroidal pore in membranes), and potenially homomultimer (as a toroidal pore in membranes).</text>
</comment>
<comment type="subcellular location">
    <subcellularLocation>
        <location evidence="5">Secreted</location>
    </subcellularLocation>
    <subcellularLocation>
        <location evidence="2">Target cell membrane</location>
    </subcellularLocation>
    <text evidence="2">Alpha-helical peptides form toroidal pores in the prey.</text>
</comment>
<comment type="tissue specificity">
    <text evidence="5">Expressed by the venom gland.</text>
</comment>
<comment type="similarity">
    <text evidence="4">Belongs to the melittin family.</text>
</comment>
<evidence type="ECO:0000250" key="1"/>
<evidence type="ECO:0000250" key="2">
    <source>
        <dbReference type="UniProtKB" id="P01501"/>
    </source>
</evidence>
<evidence type="ECO:0000303" key="3">
    <source>
    </source>
</evidence>
<evidence type="ECO:0000305" key="4"/>
<evidence type="ECO:0000305" key="5">
    <source>
    </source>
</evidence>
<dbReference type="EMBL" id="AF487909">
    <property type="protein sequence ID" value="AAO12203.1"/>
    <property type="molecule type" value="mRNA"/>
</dbReference>
<dbReference type="SMR" id="P59261"/>
<dbReference type="GO" id="GO:0005576">
    <property type="term" value="C:extracellular region"/>
    <property type="evidence" value="ECO:0007669"/>
    <property type="project" value="UniProtKB-SubCell"/>
</dbReference>
<dbReference type="GO" id="GO:0044218">
    <property type="term" value="C:other organism cell membrane"/>
    <property type="evidence" value="ECO:0007669"/>
    <property type="project" value="UniProtKB-KW"/>
</dbReference>
<dbReference type="GO" id="GO:0046930">
    <property type="term" value="C:pore complex"/>
    <property type="evidence" value="ECO:0007669"/>
    <property type="project" value="UniProtKB-KW"/>
</dbReference>
<dbReference type="GO" id="GO:0015288">
    <property type="term" value="F:porin activity"/>
    <property type="evidence" value="ECO:0007669"/>
    <property type="project" value="UniProtKB-KW"/>
</dbReference>
<dbReference type="GO" id="GO:0004860">
    <property type="term" value="F:protein kinase inhibitor activity"/>
    <property type="evidence" value="ECO:0007669"/>
    <property type="project" value="InterPro"/>
</dbReference>
<dbReference type="GO" id="GO:0090729">
    <property type="term" value="F:toxin activity"/>
    <property type="evidence" value="ECO:0007669"/>
    <property type="project" value="UniProtKB-KW"/>
</dbReference>
<dbReference type="GO" id="GO:0031640">
    <property type="term" value="P:killing of cells of another organism"/>
    <property type="evidence" value="ECO:0007669"/>
    <property type="project" value="UniProtKB-KW"/>
</dbReference>
<dbReference type="GO" id="GO:0006811">
    <property type="term" value="P:monoatomic ion transport"/>
    <property type="evidence" value="ECO:0007669"/>
    <property type="project" value="UniProtKB-KW"/>
</dbReference>
<dbReference type="InterPro" id="IPR002116">
    <property type="entry name" value="Melittin/Api_allergen"/>
</dbReference>
<dbReference type="Pfam" id="PF01372">
    <property type="entry name" value="Melittin"/>
    <property type="match status" value="1"/>
</dbReference>
<organism>
    <name type="scientific">Polistes hebraeus</name>
    <name type="common">Paper wasp</name>
    <dbReference type="NCBI Taxonomy" id="202806"/>
    <lineage>
        <taxon>Eukaryota</taxon>
        <taxon>Metazoa</taxon>
        <taxon>Ecdysozoa</taxon>
        <taxon>Arthropoda</taxon>
        <taxon>Hexapoda</taxon>
        <taxon>Insecta</taxon>
        <taxon>Pterygota</taxon>
        <taxon>Neoptera</taxon>
        <taxon>Endopterygota</taxon>
        <taxon>Hymenoptera</taxon>
        <taxon>Apocrita</taxon>
        <taxon>Aculeata</taxon>
        <taxon>Vespoidea</taxon>
        <taxon>Vespidae</taxon>
        <taxon>Polistinae</taxon>
        <taxon>Polistini</taxon>
        <taxon>Polistes</taxon>
    </lineage>
</organism>
<feature type="signal peptide" evidence="1">
    <location>
        <begin position="1"/>
        <end position="21"/>
    </location>
</feature>
<feature type="propeptide" id="PRO_0000035150" description="Removed by a dipeptidylpeptidase" evidence="1">
    <location>
        <begin position="22"/>
        <end position="43"/>
    </location>
</feature>
<feature type="peptide" id="PRO_0000035151" description="Melittin" evidence="2">
    <location>
        <begin position="44"/>
        <end position="69"/>
    </location>
</feature>
<feature type="site" description="Important for the flexibility at the center of the helix, flexibility that is important for the stability of the voltage-gated pore" evidence="2">
    <location>
        <position position="57"/>
    </location>
</feature>
<feature type="modified residue" description="N-formylglycine; partial" evidence="2">
    <location>
        <position position="44"/>
    </location>
</feature>
<feature type="modified residue" description="Glutamine amide" evidence="2">
    <location>
        <position position="69"/>
    </location>
</feature>
<proteinExistence type="inferred from homology"/>
<name>MEL_POLHE</name>
<protein>
    <recommendedName>
        <fullName evidence="3">Melittin</fullName>
        <shortName>MEL</shortName>
        <shortName>MLT</shortName>
    </recommendedName>
</protein>
<accession>P59261</accession>
<reference key="1">
    <citation type="journal article" date="2003" name="Yi Chuan Xue Bao">
        <title>Cloning and comparative analysis of the venom prepromelittin genes from four wasp species.</title>
        <authorList>
            <person name="Shi W.J."/>
            <person name="Zhang S.F."/>
            <person name="Zhang C.-X."/>
            <person name="Cheng J.A."/>
        </authorList>
    </citation>
    <scope>NUCLEOTIDE SEQUENCE [MRNA]</scope>
    <source>
        <tissue>Venom gland</tissue>
    </source>
</reference>
<sequence>MKFLVNVALVFMVVYISFIYAAPEPEPAPEAEAEADAEADPEAGIGAVLKVLATGLPALISWIKRKRQQG</sequence>